<keyword id="KW-0067">ATP-binding</keyword>
<keyword id="KW-0963">Cytoplasm</keyword>
<keyword id="KW-0436">Ligase</keyword>
<keyword id="KW-0535">Nitrogen fixation</keyword>
<keyword id="KW-0547">Nucleotide-binding</keyword>
<keyword id="KW-1185">Reference proteome</keyword>
<dbReference type="EC" id="6.3.1.2"/>
<dbReference type="EMBL" id="S46513">
    <property type="protein sequence ID" value="AAB23379.1"/>
    <property type="molecule type" value="mRNA"/>
</dbReference>
<dbReference type="EMBL" id="X68598">
    <property type="protein sequence ID" value="CAA48590.1"/>
    <property type="molecule type" value="mRNA"/>
</dbReference>
<dbReference type="PIR" id="JQ0937">
    <property type="entry name" value="JQ0937"/>
</dbReference>
<dbReference type="RefSeq" id="NP_001238531.1">
    <property type="nucleotide sequence ID" value="NM_001251602.1"/>
</dbReference>
<dbReference type="SMR" id="P24099"/>
<dbReference type="FunCoup" id="P24099">
    <property type="interactions" value="4032"/>
</dbReference>
<dbReference type="STRING" id="3847.P24099"/>
<dbReference type="PaxDb" id="3847-GLYMA11G33560.1"/>
<dbReference type="GeneID" id="548082"/>
<dbReference type="KEGG" id="gmx:548082"/>
<dbReference type="eggNOG" id="KOG0683">
    <property type="taxonomic scope" value="Eukaryota"/>
</dbReference>
<dbReference type="InParanoid" id="P24099"/>
<dbReference type="OrthoDB" id="1936100at2759"/>
<dbReference type="Proteomes" id="UP000008827">
    <property type="component" value="Unplaced"/>
</dbReference>
<dbReference type="GO" id="GO:0005737">
    <property type="term" value="C:cytoplasm"/>
    <property type="evidence" value="ECO:0000318"/>
    <property type="project" value="GO_Central"/>
</dbReference>
<dbReference type="GO" id="GO:0005524">
    <property type="term" value="F:ATP binding"/>
    <property type="evidence" value="ECO:0007669"/>
    <property type="project" value="UniProtKB-KW"/>
</dbReference>
<dbReference type="GO" id="GO:0004356">
    <property type="term" value="F:glutamine synthetase activity"/>
    <property type="evidence" value="ECO:0000318"/>
    <property type="project" value="GO_Central"/>
</dbReference>
<dbReference type="GO" id="GO:0006542">
    <property type="term" value="P:glutamine biosynthetic process"/>
    <property type="evidence" value="ECO:0000318"/>
    <property type="project" value="GO_Central"/>
</dbReference>
<dbReference type="FunFam" id="3.30.590.10:FF:000004">
    <property type="entry name" value="Glutamine synthetase"/>
    <property type="match status" value="1"/>
</dbReference>
<dbReference type="Gene3D" id="3.10.20.70">
    <property type="entry name" value="Glutamine synthetase, N-terminal domain"/>
    <property type="match status" value="1"/>
</dbReference>
<dbReference type="Gene3D" id="3.30.590.10">
    <property type="entry name" value="Glutamine synthetase/guanido kinase, catalytic domain"/>
    <property type="match status" value="1"/>
</dbReference>
<dbReference type="InterPro" id="IPR008147">
    <property type="entry name" value="Gln_synt_N"/>
</dbReference>
<dbReference type="InterPro" id="IPR036651">
    <property type="entry name" value="Gln_synt_N_sf"/>
</dbReference>
<dbReference type="InterPro" id="IPR014746">
    <property type="entry name" value="Gln_synth/guanido_kin_cat_dom"/>
</dbReference>
<dbReference type="InterPro" id="IPR008146">
    <property type="entry name" value="Gln_synth_cat_dom"/>
</dbReference>
<dbReference type="InterPro" id="IPR027303">
    <property type="entry name" value="Gln_synth_gly_rich_site"/>
</dbReference>
<dbReference type="InterPro" id="IPR027302">
    <property type="entry name" value="Gln_synth_N_conserv_site"/>
</dbReference>
<dbReference type="InterPro" id="IPR050292">
    <property type="entry name" value="Glutamine_Synthetase"/>
</dbReference>
<dbReference type="PANTHER" id="PTHR20852">
    <property type="entry name" value="GLUTAMINE SYNTHETASE"/>
    <property type="match status" value="1"/>
</dbReference>
<dbReference type="PANTHER" id="PTHR20852:SF114">
    <property type="entry name" value="GLUTAMINE SYNTHETASE CYTOSOLIC ISOZYME 1"/>
    <property type="match status" value="1"/>
</dbReference>
<dbReference type="Pfam" id="PF00120">
    <property type="entry name" value="Gln-synt_C"/>
    <property type="match status" value="1"/>
</dbReference>
<dbReference type="SMART" id="SM01230">
    <property type="entry name" value="Gln-synt_C"/>
    <property type="match status" value="1"/>
</dbReference>
<dbReference type="SUPFAM" id="SSF54368">
    <property type="entry name" value="Glutamine synthetase, N-terminal domain"/>
    <property type="match status" value="1"/>
</dbReference>
<dbReference type="SUPFAM" id="SSF55931">
    <property type="entry name" value="Glutamine synthetase/guanido kinase"/>
    <property type="match status" value="1"/>
</dbReference>
<dbReference type="PROSITE" id="PS00180">
    <property type="entry name" value="GLNA_1"/>
    <property type="match status" value="1"/>
</dbReference>
<dbReference type="PROSITE" id="PS00181">
    <property type="entry name" value="GLNA_ATP"/>
    <property type="match status" value="1"/>
</dbReference>
<dbReference type="PROSITE" id="PS51986">
    <property type="entry name" value="GS_BETA_GRASP"/>
    <property type="match status" value="1"/>
</dbReference>
<dbReference type="PROSITE" id="PS51987">
    <property type="entry name" value="GS_CATALYTIC"/>
    <property type="match status" value="1"/>
</dbReference>
<protein>
    <recommendedName>
        <fullName>Glutamine synthetase cytosolic isozyme 1</fullName>
        <ecNumber>6.3.1.2</ecNumber>
    </recommendedName>
    <alternativeName>
        <fullName>GS1-1</fullName>
    </alternativeName>
    <alternativeName>
        <fullName>Glutamate--ammonia ligase</fullName>
    </alternativeName>
</protein>
<comment type="catalytic activity">
    <reaction>
        <text>L-glutamate + NH4(+) + ATP = L-glutamine + ADP + phosphate + H(+)</text>
        <dbReference type="Rhea" id="RHEA:16169"/>
        <dbReference type="ChEBI" id="CHEBI:15378"/>
        <dbReference type="ChEBI" id="CHEBI:28938"/>
        <dbReference type="ChEBI" id="CHEBI:29985"/>
        <dbReference type="ChEBI" id="CHEBI:30616"/>
        <dbReference type="ChEBI" id="CHEBI:43474"/>
        <dbReference type="ChEBI" id="CHEBI:58359"/>
        <dbReference type="ChEBI" id="CHEBI:456216"/>
        <dbReference type="EC" id="6.3.1.2"/>
    </reaction>
</comment>
<comment type="subunit">
    <text>Homooctamer.</text>
</comment>
<comment type="subcellular location">
    <subcellularLocation>
        <location>Cytoplasm</location>
    </subcellularLocation>
</comment>
<comment type="miscellaneous">
    <text>Irreversibly inhibited by the herbicide L-phosphinothricin (PPT).</text>
</comment>
<comment type="similarity">
    <text evidence="4">Belongs to the glutamine synthetase family.</text>
</comment>
<organism>
    <name type="scientific">Glycine max</name>
    <name type="common">Soybean</name>
    <name type="synonym">Glycine hispida</name>
    <dbReference type="NCBI Taxonomy" id="3847"/>
    <lineage>
        <taxon>Eukaryota</taxon>
        <taxon>Viridiplantae</taxon>
        <taxon>Streptophyta</taxon>
        <taxon>Embryophyta</taxon>
        <taxon>Tracheophyta</taxon>
        <taxon>Spermatophyta</taxon>
        <taxon>Magnoliopsida</taxon>
        <taxon>eudicotyledons</taxon>
        <taxon>Gunneridae</taxon>
        <taxon>Pentapetalae</taxon>
        <taxon>rosids</taxon>
        <taxon>fabids</taxon>
        <taxon>Fabales</taxon>
        <taxon>Fabaceae</taxon>
        <taxon>Papilionoideae</taxon>
        <taxon>50 kb inversion clade</taxon>
        <taxon>NPAAA clade</taxon>
        <taxon>indigoferoid/millettioid clade</taxon>
        <taxon>Phaseoleae</taxon>
        <taxon>Glycine</taxon>
        <taxon>Glycine subgen. Soja</taxon>
    </lineage>
</organism>
<sequence length="355" mass="38845">MSLLSDLINLNLSDTTEKVIAEYIWIGGSGMDLRSKARTLPGPVSDPSELPKWNYDGSSTGQAPGEDSEAIYTHKPFQDPFRRGNNILVICDAYTPAGEPIPTNKRHAAAKVFSHPDVVAEVPWYGIEQEYTLLQKDIQWPLGWPVGGFPGPQGPYYCGVGADKAFGRDIVDAHYKACIYAGINISGINGEVMPGQWEFQVGPSVGISAGDEIWAARYILERITEIAGVVVSFDPKPIPGDWNGAGAHTNYSTKSMREDGGYEVIKAAIDKLGKKHKEHIAAYGEGNERRLTGRHETADINTFLWGVANRGASVRVGRDTEKAGKGYFEDRRPASNMDPYVVTSMIADTTILWKP</sequence>
<feature type="chain" id="PRO_0000153196" description="Glutamine synthetase cytosolic isozyme 1">
    <location>
        <begin position="1"/>
        <end position="355"/>
    </location>
</feature>
<feature type="domain" description="GS beta-grasp" evidence="1">
    <location>
        <begin position="19"/>
        <end position="98"/>
    </location>
</feature>
<feature type="domain" description="GS catalytic" evidence="2">
    <location>
        <begin position="105"/>
        <end position="355"/>
    </location>
</feature>
<feature type="region of interest" description="Disordered" evidence="3">
    <location>
        <begin position="39"/>
        <end position="67"/>
    </location>
</feature>
<accession>P24099</accession>
<name>GLNA1_SOYBN</name>
<proteinExistence type="evidence at transcript level"/>
<reference key="1">
    <citation type="journal article" date="1991" name="Plant Cell">
        <title>Ammonia-regulated expression of a soybean gene encoding cytosolic glutamine synthetase in transgenic Lotus corniculatus.</title>
        <authorList>
            <person name="Miao G.-H."/>
            <person name="Hirel B."/>
            <person name="Marsolier M.C."/>
            <person name="Ridge R.W."/>
            <person name="Verma D.P.S."/>
        </authorList>
    </citation>
    <scope>NUCLEOTIDE SEQUENCE [MRNA]</scope>
    <source>
        <strain>cv. Prize</strain>
    </source>
</reference>
<reference key="2">
    <citation type="journal article" date="1992" name="Plant Mol. Biol.">
        <title>Forcing expression of a soybean root glutamine synthetase gene in tobacco leaves induces a native gene encoding cytosolic enzyme.</title>
        <authorList>
            <person name="Hirel B."/>
            <person name="Marsolier M.C."/>
            <person name="Hoarau A."/>
            <person name="Hoarau J."/>
            <person name="Brangeon J."/>
            <person name="Schafer R."/>
            <person name="Verma D.P.S."/>
        </authorList>
    </citation>
    <scope>NUCLEOTIDE SEQUENCE [MRNA] OF 333-355</scope>
    <source>
        <strain>cv. Prize</strain>
        <tissue>Root nodule</tissue>
    </source>
</reference>
<evidence type="ECO:0000255" key="1">
    <source>
        <dbReference type="PROSITE-ProRule" id="PRU01330"/>
    </source>
</evidence>
<evidence type="ECO:0000255" key="2">
    <source>
        <dbReference type="PROSITE-ProRule" id="PRU01331"/>
    </source>
</evidence>
<evidence type="ECO:0000256" key="3">
    <source>
        <dbReference type="SAM" id="MobiDB-lite"/>
    </source>
</evidence>
<evidence type="ECO:0000305" key="4"/>